<accession>A0A0J9SZQ5</accession>
<accession>Q86GB1</accession>
<feature type="chain" id="PRO_0000460195" description="Hexose transporter 1">
    <location>
        <begin position="1"/>
        <end position="502"/>
    </location>
</feature>
<feature type="topological domain" description="Cytoplasmic" evidence="7">
    <location>
        <begin position="1"/>
        <end position="26"/>
    </location>
</feature>
<feature type="transmembrane region" description="Helical" evidence="3">
    <location>
        <begin position="27"/>
        <end position="47"/>
    </location>
</feature>
<feature type="topological domain" description="Extracellular" evidence="7">
    <location>
        <begin position="48"/>
        <end position="76"/>
    </location>
</feature>
<feature type="transmembrane region" description="Helical" evidence="3">
    <location>
        <begin position="77"/>
        <end position="97"/>
    </location>
</feature>
<feature type="topological domain" description="Cytoplasmic" evidence="7">
    <location>
        <begin position="98"/>
        <end position="102"/>
    </location>
</feature>
<feature type="transmembrane region" description="Helical" evidence="3">
    <location>
        <begin position="103"/>
        <end position="123"/>
    </location>
</feature>
<feature type="topological domain" description="Extracellular" evidence="7">
    <location>
        <begin position="124"/>
        <end position="132"/>
    </location>
</feature>
<feature type="transmembrane region" description="Helical" evidence="3">
    <location>
        <begin position="133"/>
        <end position="153"/>
    </location>
</feature>
<feature type="topological domain" description="Cytoplasmic" evidence="7">
    <location>
        <begin position="154"/>
        <end position="163"/>
    </location>
</feature>
<feature type="transmembrane region" description="Helical" evidence="3">
    <location>
        <begin position="164"/>
        <end position="184"/>
    </location>
</feature>
<feature type="topological domain" description="Extracellular" evidence="7">
    <location>
        <begin position="185"/>
        <end position="205"/>
    </location>
</feature>
<feature type="transmembrane region" description="Helical" evidence="3">
    <location>
        <begin position="206"/>
        <end position="226"/>
    </location>
</feature>
<feature type="topological domain" description="Cytoplasmic" evidence="7">
    <location>
        <begin position="227"/>
        <end position="291"/>
    </location>
</feature>
<feature type="transmembrane region" description="Helical" evidence="3">
    <location>
        <begin position="292"/>
        <end position="312"/>
    </location>
</feature>
<feature type="topological domain" description="Extracellular" evidence="7">
    <location>
        <begin position="313"/>
        <end position="329"/>
    </location>
</feature>
<feature type="transmembrane region" description="Helical" evidence="3">
    <location>
        <begin position="330"/>
        <end position="350"/>
    </location>
</feature>
<feature type="topological domain" description="Cytoplasmic" evidence="7">
    <location>
        <begin position="351"/>
        <end position="356"/>
    </location>
</feature>
<feature type="transmembrane region" description="Helical" evidence="3">
    <location>
        <begin position="357"/>
        <end position="377"/>
    </location>
</feature>
<feature type="topological domain" description="Extracellular" evidence="7">
    <location>
        <begin position="378"/>
        <end position="390"/>
    </location>
</feature>
<feature type="transmembrane region" description="Helical" evidence="3">
    <location>
        <begin position="391"/>
        <end position="411"/>
    </location>
</feature>
<feature type="topological domain" description="Cytoplasmic" evidence="7">
    <location>
        <begin position="412"/>
        <end position="427"/>
    </location>
</feature>
<feature type="transmembrane region" description="Helical" evidence="3">
    <location>
        <begin position="428"/>
        <end position="448"/>
    </location>
</feature>
<feature type="topological domain" description="Extracellular" evidence="7">
    <location>
        <begin position="449"/>
        <end position="453"/>
    </location>
</feature>
<feature type="transmembrane region" description="Helical" evidence="3">
    <location>
        <begin position="454"/>
        <end position="474"/>
    </location>
</feature>
<feature type="topological domain" description="Cytoplasmic" evidence="7">
    <location>
        <begin position="475"/>
        <end position="502"/>
    </location>
</feature>
<feature type="binding site" evidence="2">
    <location>
        <position position="167"/>
    </location>
    <ligand>
        <name>alpha-D-glucose</name>
        <dbReference type="ChEBI" id="CHEBI:17925"/>
    </ligand>
</feature>
<feature type="binding site" evidence="2">
    <location>
        <position position="167"/>
    </location>
    <ligand>
        <name>beta-D-glucose</name>
        <dbReference type="ChEBI" id="CHEBI:15903"/>
    </ligand>
</feature>
<feature type="binding site" evidence="2">
    <location>
        <position position="303"/>
    </location>
    <ligand>
        <name>alpha-D-glucose</name>
        <dbReference type="ChEBI" id="CHEBI:17925"/>
    </ligand>
</feature>
<feature type="binding site" evidence="2">
    <location>
        <position position="303"/>
    </location>
    <ligand>
        <name>beta-D-glucose</name>
        <dbReference type="ChEBI" id="CHEBI:15903"/>
    </ligand>
</feature>
<feature type="binding site" evidence="2">
    <location>
        <position position="304"/>
    </location>
    <ligand>
        <name>alpha-D-glucose</name>
        <dbReference type="ChEBI" id="CHEBI:17925"/>
    </ligand>
</feature>
<feature type="binding site" evidence="2">
    <location>
        <position position="309"/>
    </location>
    <ligand>
        <name>alpha-D-glucose</name>
        <dbReference type="ChEBI" id="CHEBI:17925"/>
    </ligand>
</feature>
<feature type="binding site" evidence="2">
    <location>
        <position position="309"/>
    </location>
    <ligand>
        <name>beta-D-glucose</name>
        <dbReference type="ChEBI" id="CHEBI:15903"/>
    </ligand>
</feature>
<feature type="binding site" evidence="2">
    <location>
        <position position="339"/>
    </location>
    <ligand>
        <name>beta-D-glucose</name>
        <dbReference type="ChEBI" id="CHEBI:15903"/>
    </ligand>
</feature>
<feature type="binding site" evidence="2">
    <location>
        <position position="410"/>
    </location>
    <ligand>
        <name>alpha-D-glucose</name>
        <dbReference type="ChEBI" id="CHEBI:17925"/>
    </ligand>
</feature>
<feature type="disulfide bond" evidence="2">
    <location>
        <begin position="61"/>
        <end position="68"/>
    </location>
</feature>
<feature type="mutagenesis site" description="Reduces D-fructose transport with no significant effect on D-glucose uptake. Reduces susceptibility to inhibition by compound 3361." evidence="5">
    <original>Q</original>
    <variation>N</variation>
    <location>
        <position position="167"/>
    </location>
</feature>
<evidence type="ECO:0000250" key="1">
    <source>
        <dbReference type="UniProtKB" id="Q700M0"/>
    </source>
</evidence>
<evidence type="ECO:0000250" key="2">
    <source>
        <dbReference type="UniProtKB" id="Q7KWJ5"/>
    </source>
</evidence>
<evidence type="ECO:0000255" key="3"/>
<evidence type="ECO:0000269" key="4">
    <source>
    </source>
</evidence>
<evidence type="ECO:0000269" key="5">
    <source>
    </source>
</evidence>
<evidence type="ECO:0000303" key="6">
    <source>
    </source>
</evidence>
<evidence type="ECO:0000305" key="7"/>
<evidence type="ECO:0000312" key="8">
    <source>
        <dbReference type="EMBL" id="CAD71144.1"/>
    </source>
</evidence>
<evidence type="ECO:0000312" key="9">
    <source>
        <dbReference type="EMBL" id="KMZ88276.1"/>
    </source>
</evidence>
<evidence type="ECO:0000312" key="10">
    <source>
        <dbReference type="Proteomes" id="UP000053327"/>
    </source>
</evidence>
<name>HXT1_PLAV1</name>
<reference evidence="8" key="1">
    <citation type="journal article" date="2003" name="Proc. Natl. Acad. Sci. U.S.A.">
        <title>Validation of the hexose transporter of Plasmodium falciparum as a novel drug target.</title>
        <authorList>
            <person name="Joet T."/>
            <person name="Eckstein-Ludwig U."/>
            <person name="Morin C."/>
            <person name="Krishna S."/>
        </authorList>
    </citation>
    <scope>NUCLEOTIDE SEQUENCE [MRNA]</scope>
    <scope>FUNCTION</scope>
    <scope>TRANSPORTER ACTIVITY</scope>
    <scope>BIOPHYSICOCHEMICAL PROPERTIES</scope>
</reference>
<reference evidence="10" key="2">
    <citation type="submission" date="2011-08" db="EMBL/GenBank/DDBJ databases">
        <title>The Genome Sequence of Plasmodium vivax Brazil I.</title>
        <authorList>
            <consortium name="The Broad Institute Genome Sequencing Platform"/>
            <consortium name="The Broad Institute Genome Sequencing Center for Infectious Disease"/>
            <person name="Neafsey D."/>
            <person name="Carlton J."/>
            <person name="Barnwell J."/>
            <person name="Collins W."/>
            <person name="Escalante A."/>
            <person name="Mullikin J."/>
            <person name="Saul A."/>
            <person name="Guigo R."/>
            <person name="Camara F."/>
            <person name="Young S.K."/>
            <person name="Zeng Q."/>
            <person name="Gargeya S."/>
            <person name="Fitzgerald M."/>
            <person name="Haas B."/>
            <person name="Abouelleil A."/>
            <person name="Alvarado L."/>
            <person name="Arachchi H.M."/>
            <person name="Berlin A."/>
            <person name="Brown A."/>
            <person name="Chapman S.B."/>
            <person name="Chen Z."/>
            <person name="Dunbar C."/>
            <person name="Freedman E."/>
            <person name="Gearin G."/>
            <person name="Gellesch M."/>
            <person name="Goldberg J."/>
            <person name="Griggs A."/>
            <person name="Gujja S."/>
            <person name="Heiman D."/>
            <person name="Howarth C."/>
            <person name="Larson L."/>
            <person name="Lui A."/>
            <person name="MacDonald P.J.P."/>
            <person name="Montmayeur A."/>
            <person name="Murphy C."/>
            <person name="Neiman D."/>
            <person name="Pearson M."/>
            <person name="Priest M."/>
            <person name="Roberts A."/>
            <person name="Saif S."/>
            <person name="Shea T."/>
            <person name="Shenoy N."/>
            <person name="Sisk P."/>
            <person name="Stolte C."/>
            <person name="Sykes S."/>
            <person name="Wortman J."/>
            <person name="Nusbaum C."/>
            <person name="Birren B."/>
        </authorList>
    </citation>
    <scope>NUCLEOTIDE SEQUENCE [LARGE SCALE GENOMIC DNA]</scope>
    <source>
        <strain evidence="10">Brazil I</strain>
    </source>
</reference>
<reference evidence="7" key="3">
    <citation type="journal article" date="2004" name="Biochem. J.">
        <title>Analysis of Plasmodium vivax hexose transporters and effects of a parasitocidal inhibitor.</title>
        <authorList>
            <person name="Joet T."/>
            <person name="Chotivanich K."/>
            <person name="Silamut K."/>
            <person name="Patel A.P."/>
            <person name="Morin C."/>
            <person name="Krishna S."/>
        </authorList>
    </citation>
    <scope>FUNCTION</scope>
    <scope>TRANSPORTER ACTIVITY</scope>
    <scope>ACTIVITY REGULATION</scope>
    <scope>BIOPHYSICOCHEMICAL PROPERTIES</scope>
    <scope>MUTAGENESIS OF GLN-167</scope>
</reference>
<proteinExistence type="evidence at protein level"/>
<sequence length="502" mass="55779">MKKSSKEISSSQSLKNGGSDHFFNTSLMYVLAACLASFIFGYQVSVLNTIKNFIVIEFGWCTGNKVECDDSTLKSSFLLASVFIGAVVGSGFSGYLVQHGRRFSLLVIYNFFILVSILTSITHHFHTILFSRLLSGFGIGLITVSVPMYISEMTHKDKKGAYGVLHQLFITFGIFVAVLLGMAMGEAPDAKSVDALGEFQKIWWRLMFFFPCLISILGIVLLTFFYKEETPYYLFENGKIEESKKILKKIYGTDNVDEPLKAIKDAVEQNEAAKKNSISLMRAMQIPSYRNVILLGCILSGLQQFTGINVLVSNSNELYKEFLSNKLITTLSVIMTVVNFLMTFPAIYIVEKLGRKTLLLCGCAGVICAFLPTAIANQIDSTSAFVKNLSIAATFVMIISFAVSYGPVLWIYLHEMFPSEIKDSAASLASLVNWVCAIIVVFPSDIIIKKSPTILFFIFSGMSILSFLFIFFFIKETKGGEIGTSPYITMEERQKHMGKSAV</sequence>
<gene>
    <name evidence="7" type="primary">HT1</name>
    <name evidence="9" type="ORF">PVBG_05140</name>
</gene>
<dbReference type="EMBL" id="AJ549815">
    <property type="protein sequence ID" value="CAD71144.1"/>
    <property type="molecule type" value="mRNA"/>
</dbReference>
<dbReference type="EMBL" id="KQ234769">
    <property type="protein sequence ID" value="KMZ88276.1"/>
    <property type="molecule type" value="Genomic_DNA"/>
</dbReference>
<dbReference type="SMR" id="A0A0J9SZQ5"/>
<dbReference type="EnsemblProtists" id="KMZ88276">
    <property type="protein sequence ID" value="KMZ88276"/>
    <property type="gene ID" value="PVBG_05140"/>
</dbReference>
<dbReference type="VEuPathDB" id="PlasmoDB:PVP01_0420400"/>
<dbReference type="VEuPathDB" id="PlasmoDB:PVPAM_040031300"/>
<dbReference type="VEuPathDB" id="PlasmoDB:PVW1_040026900"/>
<dbReference type="VEuPathDB" id="PlasmoDB:PVX_003665"/>
<dbReference type="HOGENOM" id="CLU_001265_30_5_1"/>
<dbReference type="OrthoDB" id="3593at418103"/>
<dbReference type="Proteomes" id="UP000053327">
    <property type="component" value="Unassembled WGS sequence"/>
</dbReference>
<dbReference type="GO" id="GO:0005886">
    <property type="term" value="C:plasma membrane"/>
    <property type="evidence" value="ECO:0007669"/>
    <property type="project" value="UniProtKB-SubCell"/>
</dbReference>
<dbReference type="GO" id="GO:0015149">
    <property type="term" value="F:hexose transmembrane transporter activity"/>
    <property type="evidence" value="ECO:0007669"/>
    <property type="project" value="TreeGrafter"/>
</dbReference>
<dbReference type="Gene3D" id="1.20.1250.20">
    <property type="entry name" value="MFS general substrate transporter like domains"/>
    <property type="match status" value="1"/>
</dbReference>
<dbReference type="InterPro" id="IPR045263">
    <property type="entry name" value="GLUT"/>
</dbReference>
<dbReference type="InterPro" id="IPR020846">
    <property type="entry name" value="MFS_dom"/>
</dbReference>
<dbReference type="InterPro" id="IPR005828">
    <property type="entry name" value="MFS_sugar_transport-like"/>
</dbReference>
<dbReference type="InterPro" id="IPR036259">
    <property type="entry name" value="MFS_trans_sf"/>
</dbReference>
<dbReference type="InterPro" id="IPR003663">
    <property type="entry name" value="Sugar/inositol_transpt"/>
</dbReference>
<dbReference type="InterPro" id="IPR005829">
    <property type="entry name" value="Sugar_transporter_CS"/>
</dbReference>
<dbReference type="NCBIfam" id="TIGR00879">
    <property type="entry name" value="SP"/>
    <property type="match status" value="1"/>
</dbReference>
<dbReference type="PANTHER" id="PTHR23503:SF8">
    <property type="entry name" value="FACILITATED GLUCOSE TRANSPORTER PROTEIN 1"/>
    <property type="match status" value="1"/>
</dbReference>
<dbReference type="PANTHER" id="PTHR23503">
    <property type="entry name" value="SOLUTE CARRIER FAMILY 2"/>
    <property type="match status" value="1"/>
</dbReference>
<dbReference type="Pfam" id="PF00083">
    <property type="entry name" value="Sugar_tr"/>
    <property type="match status" value="1"/>
</dbReference>
<dbReference type="PRINTS" id="PR00171">
    <property type="entry name" value="SUGRTRNSPORT"/>
</dbReference>
<dbReference type="SUPFAM" id="SSF103473">
    <property type="entry name" value="MFS general substrate transporter"/>
    <property type="match status" value="1"/>
</dbReference>
<dbReference type="PROSITE" id="PS50850">
    <property type="entry name" value="MFS"/>
    <property type="match status" value="1"/>
</dbReference>
<dbReference type="PROSITE" id="PS51257">
    <property type="entry name" value="PROKAR_LIPOPROTEIN"/>
    <property type="match status" value="1"/>
</dbReference>
<dbReference type="PROSITE" id="PS00216">
    <property type="entry name" value="SUGAR_TRANSPORT_1"/>
    <property type="match status" value="1"/>
</dbReference>
<dbReference type="PROSITE" id="PS00217">
    <property type="entry name" value="SUGAR_TRANSPORT_2"/>
    <property type="match status" value="1"/>
</dbReference>
<protein>
    <recommendedName>
        <fullName evidence="7">Hexose transporter 1</fullName>
        <shortName evidence="6">PvHT</shortName>
    </recommendedName>
    <alternativeName>
        <fullName evidence="8">Facilitative hexose transporter</fullName>
    </alternativeName>
</protein>
<comment type="function">
    <text evidence="1 2 4 5">Sodium-independent facilitative hexose transporter (By similarity). Can transport D-glucose and D-fructose (PubMed:12792024, PubMed:15107012). Can transport D-mannose, D-galactose, D-xylose and D-glucosamine (By similarity).</text>
</comment>
<comment type="catalytic activity">
    <reaction evidence="4 5">
        <text>D-glucose(out) = D-glucose(in)</text>
        <dbReference type="Rhea" id="RHEA:60376"/>
        <dbReference type="ChEBI" id="CHEBI:4167"/>
    </reaction>
    <physiologicalReaction direction="left-to-right" evidence="7">
        <dbReference type="Rhea" id="RHEA:60377"/>
    </physiologicalReaction>
</comment>
<comment type="catalytic activity">
    <reaction evidence="2">
        <text>D-fructose(out) = D-fructose(in)</text>
        <dbReference type="Rhea" id="RHEA:60372"/>
        <dbReference type="ChEBI" id="CHEBI:37721"/>
    </reaction>
    <physiologicalReaction direction="left-to-right" evidence="7">
        <dbReference type="Rhea" id="RHEA:60373"/>
    </physiologicalReaction>
</comment>
<comment type="catalytic activity">
    <reaction evidence="2">
        <text>D-galactose(in) = D-galactose(out)</text>
        <dbReference type="Rhea" id="RHEA:34915"/>
        <dbReference type="ChEBI" id="CHEBI:4139"/>
    </reaction>
    <physiologicalReaction direction="right-to-left" evidence="7">
        <dbReference type="Rhea" id="RHEA:34917"/>
    </physiologicalReaction>
</comment>
<comment type="catalytic activity">
    <reaction evidence="2">
        <text>D-mannose(out) = D-mannose(in)</text>
        <dbReference type="Rhea" id="RHEA:78391"/>
        <dbReference type="ChEBI" id="CHEBI:4208"/>
    </reaction>
    <physiologicalReaction direction="left-to-right" evidence="7">
        <dbReference type="Rhea" id="RHEA:78392"/>
    </physiologicalReaction>
</comment>
<comment type="catalytic activity">
    <reaction evidence="2">
        <text>D-glucosamine(out) = D-glucosamine(in)</text>
        <dbReference type="Rhea" id="RHEA:78423"/>
        <dbReference type="ChEBI" id="CHEBI:58723"/>
    </reaction>
    <physiologicalReaction direction="left-to-right" evidence="7">
        <dbReference type="Rhea" id="RHEA:78424"/>
    </physiologicalReaction>
</comment>
<comment type="catalytic activity">
    <reaction evidence="2">
        <text>D-xylose(out) = D-xylose(in)</text>
        <dbReference type="Rhea" id="RHEA:78427"/>
        <dbReference type="ChEBI" id="CHEBI:53455"/>
    </reaction>
    <physiologicalReaction direction="left-to-right" evidence="7">
        <dbReference type="Rhea" id="RHEA:78428"/>
    </physiologicalReaction>
</comment>
<comment type="activity regulation">
    <text evidence="5">Inhibited by compound 3361 (3-O-((undec-10-en)-1-yl)-D-glucose).</text>
</comment>
<comment type="biophysicochemical properties">
    <kinetics>
        <KM evidence="4">0.85 mM for D-glucose</KM>
        <KM evidence="5">0.77 mM for D-glucose</KM>
    </kinetics>
</comment>
<comment type="subunit">
    <text evidence="2">Homodimer.</text>
</comment>
<comment type="subcellular location">
    <subcellularLocation>
        <location evidence="2">Cell membrane</location>
        <topology evidence="3">Multi-pass membrane protein</topology>
    </subcellularLocation>
</comment>
<comment type="miscellaneous">
    <text evidence="5">Experiments with hexose analogs indicate that hydroxyl groups at positions C-3, C-4 and C-6 of glucose are important for high affinity interactions with HT1.</text>
</comment>
<comment type="similarity">
    <text evidence="7">Belongs to the major facilitator superfamily. Sugar transporter (TC 2.A.1.1) family.</text>
</comment>
<organism>
    <name type="scientific">Plasmodium vivax (strain Brazil I)</name>
    <dbReference type="NCBI Taxonomy" id="1033975"/>
    <lineage>
        <taxon>Eukaryota</taxon>
        <taxon>Sar</taxon>
        <taxon>Alveolata</taxon>
        <taxon>Apicomplexa</taxon>
        <taxon>Aconoidasida</taxon>
        <taxon>Haemosporida</taxon>
        <taxon>Plasmodiidae</taxon>
        <taxon>Plasmodium</taxon>
        <taxon>Plasmodium (Plasmodium)</taxon>
    </lineage>
</organism>
<keyword id="KW-1003">Cell membrane</keyword>
<keyword id="KW-1015">Disulfide bond</keyword>
<keyword id="KW-0472">Membrane</keyword>
<keyword id="KW-0762">Sugar transport</keyword>
<keyword id="KW-0812">Transmembrane</keyword>
<keyword id="KW-1133">Transmembrane helix</keyword>
<keyword id="KW-0813">Transport</keyword>